<organism>
    <name type="scientific">Enterobacteria phage Ox2</name>
    <name type="common">Bacteriophage Ox2</name>
    <dbReference type="NCBI Taxonomy" id="10691"/>
    <lineage>
        <taxon>Viruses</taxon>
        <taxon>Duplodnaviria</taxon>
        <taxon>Heunggongvirae</taxon>
        <taxon>Uroviricota</taxon>
        <taxon>Caudoviricetes</taxon>
        <taxon>Straboviridae</taxon>
        <taxon>Tevenvirinae</taxon>
        <taxon>Tequatrovirus</taxon>
    </lineage>
</organism>
<feature type="chain" id="PRO_0000165024" description="Tail fiber protein p36">
    <location>
        <begin position="1"/>
        <end position="216"/>
    </location>
</feature>
<sequence>MADLKVGSTVGGSVIWHQGNFPLNSAGDDVLYKSFKIYSEYNKPQAADNDFVSKANGGTYTGPITINYGVNSYLQLSNNETPIRIRSGGGTGNTLVVGGSSGGISFRPAGSEITTGQITITPEGLTTFTRAVTAPSITVTSTPSAASDVTRKDYVDGAINTVTANANSRVLRSGDTMTGNLTAPNLFSQNPASQPSHVPRFDQIVIKDSVQDFGYY</sequence>
<gene>
    <name type="primary">36</name>
</gene>
<organismHost>
    <name type="scientific">Escherichia coli</name>
    <dbReference type="NCBI Taxonomy" id="562"/>
</organismHost>
<protein>
    <recommendedName>
        <fullName>Tail fiber protein p36</fullName>
    </recommendedName>
    <alternativeName>
        <fullName>Protein Gp36</fullName>
    </alternativeName>
</protein>
<comment type="function">
    <text>Structural component of the distal-half tail fiber.</text>
</comment>
<comment type="subunit">
    <text>The distal half-fiber contains two molecules each of Gp36 and Gp37 and one molecule of Gp35.</text>
</comment>
<comment type="subcellular location">
    <subcellularLocation>
        <location evidence="1">Virion</location>
    </subcellularLocation>
</comment>
<proteinExistence type="predicted"/>
<name>VG36_BPOX2</name>
<dbReference type="EMBL" id="X01753">
    <property type="protein sequence ID" value="CAA25891.1"/>
    <property type="molecule type" value="Genomic_DNA"/>
</dbReference>
<dbReference type="PIR" id="C23056">
    <property type="entry name" value="TLBPX2"/>
</dbReference>
<dbReference type="GO" id="GO:0098024">
    <property type="term" value="C:virus tail, fiber"/>
    <property type="evidence" value="ECO:0007669"/>
    <property type="project" value="UniProtKB-KW"/>
</dbReference>
<dbReference type="GO" id="GO:0046718">
    <property type="term" value="P:symbiont entry into host cell"/>
    <property type="evidence" value="ECO:0007669"/>
    <property type="project" value="UniProtKB-KW"/>
</dbReference>
<dbReference type="GO" id="GO:0019062">
    <property type="term" value="P:virion attachment to host cell"/>
    <property type="evidence" value="ECO:0007669"/>
    <property type="project" value="UniProtKB-KW"/>
</dbReference>
<dbReference type="InterPro" id="IPR005601">
    <property type="entry name" value="Tail_fibre_p36"/>
</dbReference>
<dbReference type="Pfam" id="PF03903">
    <property type="entry name" value="Phage_T4_gp36"/>
    <property type="match status" value="1"/>
</dbReference>
<evidence type="ECO:0000305" key="1"/>
<keyword id="KW-0945">Host-virus interaction</keyword>
<keyword id="KW-1161">Viral attachment to host cell</keyword>
<keyword id="KW-1230">Viral tail fiber protein</keyword>
<keyword id="KW-1227">Viral tail protein</keyword>
<keyword id="KW-0946">Virion</keyword>
<keyword id="KW-1160">Virus entry into host cell</keyword>
<reference key="1">
    <citation type="journal article" date="1985" name="Nucleic Acids Res.">
        <title>The nucleotide sequences of the tail fiber gene 36 of bacteriophage T2 and of genes 36 of the T-even type Escherichia coli phages K3 and Ox2.</title>
        <authorList>
            <person name="Riede I."/>
            <person name="Drexler K."/>
            <person name="Eschbach M.-L."/>
        </authorList>
    </citation>
    <scope>NUCLEOTIDE SEQUENCE [GENOMIC DNA]</scope>
</reference>
<accession>P07627</accession>